<comment type="function">
    <text evidence="1">Catalyzes the specific phosphorylation of the 3-hydroxyl group of shikimic acid using ATP as a cosubstrate.</text>
</comment>
<comment type="catalytic activity">
    <reaction evidence="1">
        <text>shikimate + ATP = 3-phosphoshikimate + ADP + H(+)</text>
        <dbReference type="Rhea" id="RHEA:13121"/>
        <dbReference type="ChEBI" id="CHEBI:15378"/>
        <dbReference type="ChEBI" id="CHEBI:30616"/>
        <dbReference type="ChEBI" id="CHEBI:36208"/>
        <dbReference type="ChEBI" id="CHEBI:145989"/>
        <dbReference type="ChEBI" id="CHEBI:456216"/>
        <dbReference type="EC" id="2.7.1.71"/>
    </reaction>
</comment>
<comment type="cofactor">
    <cofactor evidence="1">
        <name>Mg(2+)</name>
        <dbReference type="ChEBI" id="CHEBI:18420"/>
    </cofactor>
    <text evidence="1">Binds 1 Mg(2+) ion per subunit.</text>
</comment>
<comment type="pathway">
    <text evidence="1">Metabolic intermediate biosynthesis; chorismate biosynthesis; chorismate from D-erythrose 4-phosphate and phosphoenolpyruvate: step 5/7.</text>
</comment>
<comment type="subunit">
    <text evidence="1">Monomer.</text>
</comment>
<comment type="subcellular location">
    <subcellularLocation>
        <location evidence="1">Cytoplasm</location>
    </subcellularLocation>
</comment>
<comment type="similarity">
    <text evidence="1">Belongs to the shikimate kinase family.</text>
</comment>
<reference key="1">
    <citation type="journal article" date="2001" name="Nature">
        <title>Massive gene decay in the leprosy bacillus.</title>
        <authorList>
            <person name="Cole S.T."/>
            <person name="Eiglmeier K."/>
            <person name="Parkhill J."/>
            <person name="James K.D."/>
            <person name="Thomson N.R."/>
            <person name="Wheeler P.R."/>
            <person name="Honore N."/>
            <person name="Garnier T."/>
            <person name="Churcher C.M."/>
            <person name="Harris D.E."/>
            <person name="Mungall K.L."/>
            <person name="Basham D."/>
            <person name="Brown D."/>
            <person name="Chillingworth T."/>
            <person name="Connor R."/>
            <person name="Davies R.M."/>
            <person name="Devlin K."/>
            <person name="Duthoy S."/>
            <person name="Feltwell T."/>
            <person name="Fraser A."/>
            <person name="Hamlin N."/>
            <person name="Holroyd S."/>
            <person name="Hornsby T."/>
            <person name="Jagels K."/>
            <person name="Lacroix C."/>
            <person name="Maclean J."/>
            <person name="Moule S."/>
            <person name="Murphy L.D."/>
            <person name="Oliver K."/>
            <person name="Quail M.A."/>
            <person name="Rajandream M.A."/>
            <person name="Rutherford K.M."/>
            <person name="Rutter S."/>
            <person name="Seeger K."/>
            <person name="Simon S."/>
            <person name="Simmonds M."/>
            <person name="Skelton J."/>
            <person name="Squares R."/>
            <person name="Squares S."/>
            <person name="Stevens K."/>
            <person name="Taylor K."/>
            <person name="Whitehead S."/>
            <person name="Woodward J.R."/>
            <person name="Barrell B.G."/>
        </authorList>
    </citation>
    <scope>NUCLEOTIDE SEQUENCE [LARGE SCALE GENOMIC DNA]</scope>
    <source>
        <strain>TN</strain>
    </source>
</reference>
<proteinExistence type="inferred from homology"/>
<sequence>MAPKAVLVGLPGAGKSTIGRRLSKALGVSLLDTDAAIEKQTGRSIADIFAIDGEEEFRRIEEGVVRAALVEHDGVVSLGGGAVTSPGVCAALAGHIVIYLEINAEEAMRRACGSTVRPLLAGPDRAEKFQDLMARRVPLYRRVATIRVDTNCHNLGAVVRYIMARLQAQLATPVSGGDRKSSEAERSGAPLRKSSEVVK</sequence>
<gene>
    <name evidence="1" type="primary">aroK</name>
    <name type="ordered locus">ML0517</name>
</gene>
<keyword id="KW-0028">Amino-acid biosynthesis</keyword>
<keyword id="KW-0057">Aromatic amino acid biosynthesis</keyword>
<keyword id="KW-0067">ATP-binding</keyword>
<keyword id="KW-0963">Cytoplasm</keyword>
<keyword id="KW-0418">Kinase</keyword>
<keyword id="KW-0460">Magnesium</keyword>
<keyword id="KW-0479">Metal-binding</keyword>
<keyword id="KW-0547">Nucleotide-binding</keyword>
<keyword id="KW-1185">Reference proteome</keyword>
<keyword id="KW-0808">Transferase</keyword>
<protein>
    <recommendedName>
        <fullName evidence="1">Shikimate kinase</fullName>
        <shortName evidence="1">SK</shortName>
        <ecNumber evidence="1">2.7.1.71</ecNumber>
    </recommendedName>
</protein>
<accession>Q9CCS5</accession>
<feature type="chain" id="PRO_0000192392" description="Shikimate kinase">
    <location>
        <begin position="1"/>
        <end position="199"/>
    </location>
</feature>
<feature type="region of interest" description="Disordered" evidence="2">
    <location>
        <begin position="174"/>
        <end position="199"/>
    </location>
</feature>
<feature type="compositionally biased region" description="Basic and acidic residues" evidence="2">
    <location>
        <begin position="177"/>
        <end position="186"/>
    </location>
</feature>
<feature type="binding site" evidence="1">
    <location>
        <begin position="12"/>
        <end position="17"/>
    </location>
    <ligand>
        <name>ATP</name>
        <dbReference type="ChEBI" id="CHEBI:30616"/>
    </ligand>
</feature>
<feature type="binding site" evidence="1">
    <location>
        <position position="16"/>
    </location>
    <ligand>
        <name>Mg(2+)</name>
        <dbReference type="ChEBI" id="CHEBI:18420"/>
    </ligand>
</feature>
<feature type="binding site" evidence="1">
    <location>
        <position position="34"/>
    </location>
    <ligand>
        <name>substrate</name>
    </ligand>
</feature>
<feature type="binding site" evidence="1">
    <location>
        <position position="58"/>
    </location>
    <ligand>
        <name>substrate</name>
    </ligand>
</feature>
<feature type="binding site" evidence="1">
    <location>
        <position position="80"/>
    </location>
    <ligand>
        <name>substrate</name>
    </ligand>
</feature>
<feature type="binding site" evidence="1">
    <location>
        <position position="117"/>
    </location>
    <ligand>
        <name>ATP</name>
        <dbReference type="ChEBI" id="CHEBI:30616"/>
    </ligand>
</feature>
<feature type="binding site" evidence="1">
    <location>
        <position position="136"/>
    </location>
    <ligand>
        <name>substrate</name>
    </ligand>
</feature>
<dbReference type="EC" id="2.7.1.71" evidence="1"/>
<dbReference type="EMBL" id="AL583918">
    <property type="protein sequence ID" value="CAC30025.1"/>
    <property type="molecule type" value="Genomic_DNA"/>
</dbReference>
<dbReference type="PIR" id="E86973">
    <property type="entry name" value="E86973"/>
</dbReference>
<dbReference type="RefSeq" id="NP_301442.1">
    <property type="nucleotide sequence ID" value="NC_002677.1"/>
</dbReference>
<dbReference type="RefSeq" id="WP_010907766.1">
    <property type="nucleotide sequence ID" value="NC_002677.1"/>
</dbReference>
<dbReference type="SMR" id="Q9CCS5"/>
<dbReference type="STRING" id="272631.gene:17574338"/>
<dbReference type="KEGG" id="mle:ML0517"/>
<dbReference type="PATRIC" id="fig|272631.5.peg.906"/>
<dbReference type="Leproma" id="ML0517"/>
<dbReference type="eggNOG" id="COG0703">
    <property type="taxonomic scope" value="Bacteria"/>
</dbReference>
<dbReference type="HOGENOM" id="CLU_057607_3_3_11"/>
<dbReference type="OrthoDB" id="9800332at2"/>
<dbReference type="UniPathway" id="UPA00053">
    <property type="reaction ID" value="UER00088"/>
</dbReference>
<dbReference type="Proteomes" id="UP000000806">
    <property type="component" value="Chromosome"/>
</dbReference>
<dbReference type="GO" id="GO:0005829">
    <property type="term" value="C:cytosol"/>
    <property type="evidence" value="ECO:0007669"/>
    <property type="project" value="TreeGrafter"/>
</dbReference>
<dbReference type="GO" id="GO:0005524">
    <property type="term" value="F:ATP binding"/>
    <property type="evidence" value="ECO:0007669"/>
    <property type="project" value="UniProtKB-UniRule"/>
</dbReference>
<dbReference type="GO" id="GO:0000287">
    <property type="term" value="F:magnesium ion binding"/>
    <property type="evidence" value="ECO:0007669"/>
    <property type="project" value="UniProtKB-UniRule"/>
</dbReference>
<dbReference type="GO" id="GO:0004765">
    <property type="term" value="F:shikimate kinase activity"/>
    <property type="evidence" value="ECO:0007669"/>
    <property type="project" value="UniProtKB-UniRule"/>
</dbReference>
<dbReference type="GO" id="GO:0008652">
    <property type="term" value="P:amino acid biosynthetic process"/>
    <property type="evidence" value="ECO:0007669"/>
    <property type="project" value="UniProtKB-KW"/>
</dbReference>
<dbReference type="GO" id="GO:0009073">
    <property type="term" value="P:aromatic amino acid family biosynthetic process"/>
    <property type="evidence" value="ECO:0007669"/>
    <property type="project" value="UniProtKB-KW"/>
</dbReference>
<dbReference type="GO" id="GO:0009423">
    <property type="term" value="P:chorismate biosynthetic process"/>
    <property type="evidence" value="ECO:0007669"/>
    <property type="project" value="UniProtKB-UniRule"/>
</dbReference>
<dbReference type="CDD" id="cd00464">
    <property type="entry name" value="SK"/>
    <property type="match status" value="1"/>
</dbReference>
<dbReference type="Gene3D" id="3.40.50.300">
    <property type="entry name" value="P-loop containing nucleotide triphosphate hydrolases"/>
    <property type="match status" value="1"/>
</dbReference>
<dbReference type="HAMAP" id="MF_00109">
    <property type="entry name" value="Shikimate_kinase"/>
    <property type="match status" value="1"/>
</dbReference>
<dbReference type="InterPro" id="IPR027417">
    <property type="entry name" value="P-loop_NTPase"/>
</dbReference>
<dbReference type="InterPro" id="IPR031322">
    <property type="entry name" value="Shikimate/glucono_kinase"/>
</dbReference>
<dbReference type="InterPro" id="IPR000623">
    <property type="entry name" value="Shikimate_kinase/TSH1"/>
</dbReference>
<dbReference type="InterPro" id="IPR023000">
    <property type="entry name" value="Shikimate_kinase_CS"/>
</dbReference>
<dbReference type="PANTHER" id="PTHR21087">
    <property type="entry name" value="SHIKIMATE KINASE"/>
    <property type="match status" value="1"/>
</dbReference>
<dbReference type="PANTHER" id="PTHR21087:SF16">
    <property type="entry name" value="SHIKIMATE KINASE 1, CHLOROPLASTIC"/>
    <property type="match status" value="1"/>
</dbReference>
<dbReference type="Pfam" id="PF01202">
    <property type="entry name" value="SKI"/>
    <property type="match status" value="1"/>
</dbReference>
<dbReference type="PRINTS" id="PR01100">
    <property type="entry name" value="SHIKIMTKNASE"/>
</dbReference>
<dbReference type="SUPFAM" id="SSF52540">
    <property type="entry name" value="P-loop containing nucleoside triphosphate hydrolases"/>
    <property type="match status" value="1"/>
</dbReference>
<dbReference type="PROSITE" id="PS01128">
    <property type="entry name" value="SHIKIMATE_KINASE"/>
    <property type="match status" value="1"/>
</dbReference>
<evidence type="ECO:0000255" key="1">
    <source>
        <dbReference type="HAMAP-Rule" id="MF_00109"/>
    </source>
</evidence>
<evidence type="ECO:0000256" key="2">
    <source>
        <dbReference type="SAM" id="MobiDB-lite"/>
    </source>
</evidence>
<name>AROK_MYCLE</name>
<organism>
    <name type="scientific">Mycobacterium leprae (strain TN)</name>
    <dbReference type="NCBI Taxonomy" id="272631"/>
    <lineage>
        <taxon>Bacteria</taxon>
        <taxon>Bacillati</taxon>
        <taxon>Actinomycetota</taxon>
        <taxon>Actinomycetes</taxon>
        <taxon>Mycobacteriales</taxon>
        <taxon>Mycobacteriaceae</taxon>
        <taxon>Mycobacterium</taxon>
    </lineage>
</organism>